<sequence length="367" mass="38879">MTDAPELLKGPLEDRHRELGANFAEFGGWLMPVSYAGTVSEHSATRNAVGLFDVSHLGKALVRGPGAAQFVNSVLTNDLGRIRPGKAQYTLCCSESGGVIDDLIAYYVDDDEIFLVSNAANTAAVVDALQAVVPAGLTIINQHRSHAVLAVQGPRSTDVLGELGLPTGIDYMGYVDASYAGVPVRVCRTGYTGEQGYELLPPWESADVVFDALVAAVVDARGEPAGLGARDTLRTEMGYPLYGHELSLDISPLQARCGWAIGWKKDAFLGRDALLAEKAAGPRRLLRGLRMAGRGVLRPGLTVCAGDIPIGVTTSGTFSPTLQVGVALALIDSEAAVQDGQQIIVDVRGRAVECEVVRPPFIEVKTR</sequence>
<proteinExistence type="inferred from homology"/>
<feature type="chain" id="PRO_1000125643" description="Aminomethyltransferase">
    <location>
        <begin position="1"/>
        <end position="367"/>
    </location>
</feature>
<comment type="function">
    <text evidence="1">The glycine cleavage system catalyzes the degradation of glycine.</text>
</comment>
<comment type="catalytic activity">
    <reaction evidence="1">
        <text>N(6)-[(R)-S(8)-aminomethyldihydrolipoyl]-L-lysyl-[protein] + (6S)-5,6,7,8-tetrahydrofolate = N(6)-[(R)-dihydrolipoyl]-L-lysyl-[protein] + (6R)-5,10-methylene-5,6,7,8-tetrahydrofolate + NH4(+)</text>
        <dbReference type="Rhea" id="RHEA:16945"/>
        <dbReference type="Rhea" id="RHEA-COMP:10475"/>
        <dbReference type="Rhea" id="RHEA-COMP:10492"/>
        <dbReference type="ChEBI" id="CHEBI:15636"/>
        <dbReference type="ChEBI" id="CHEBI:28938"/>
        <dbReference type="ChEBI" id="CHEBI:57453"/>
        <dbReference type="ChEBI" id="CHEBI:83100"/>
        <dbReference type="ChEBI" id="CHEBI:83143"/>
        <dbReference type="EC" id="2.1.2.10"/>
    </reaction>
</comment>
<comment type="subunit">
    <text evidence="1">The glycine cleavage system is composed of four proteins: P, T, L and H.</text>
</comment>
<comment type="similarity">
    <text evidence="1">Belongs to the GcvT family.</text>
</comment>
<keyword id="KW-0032">Aminotransferase</keyword>
<keyword id="KW-0808">Transferase</keyword>
<name>GCST_MYCLB</name>
<accession>B8ZQK6</accession>
<gene>
    <name evidence="1" type="primary">gcvT</name>
    <name type="ordered locus">MLBr00865</name>
</gene>
<organism>
    <name type="scientific">Mycobacterium leprae (strain Br4923)</name>
    <dbReference type="NCBI Taxonomy" id="561304"/>
    <lineage>
        <taxon>Bacteria</taxon>
        <taxon>Bacillati</taxon>
        <taxon>Actinomycetota</taxon>
        <taxon>Actinomycetes</taxon>
        <taxon>Mycobacteriales</taxon>
        <taxon>Mycobacteriaceae</taxon>
        <taxon>Mycobacterium</taxon>
    </lineage>
</organism>
<protein>
    <recommendedName>
        <fullName evidence="1">Aminomethyltransferase</fullName>
        <ecNumber evidence="1">2.1.2.10</ecNumber>
    </recommendedName>
    <alternativeName>
        <fullName evidence="1">Glycine cleavage system T protein</fullName>
    </alternativeName>
</protein>
<evidence type="ECO:0000255" key="1">
    <source>
        <dbReference type="HAMAP-Rule" id="MF_00259"/>
    </source>
</evidence>
<dbReference type="EC" id="2.1.2.10" evidence="1"/>
<dbReference type="EMBL" id="FM211192">
    <property type="protein sequence ID" value="CAR70960.1"/>
    <property type="molecule type" value="Genomic_DNA"/>
</dbReference>
<dbReference type="SMR" id="B8ZQK6"/>
<dbReference type="KEGG" id="mlb:MLBr00865"/>
<dbReference type="HOGENOM" id="CLU_007884_10_2_11"/>
<dbReference type="Proteomes" id="UP000006900">
    <property type="component" value="Chromosome"/>
</dbReference>
<dbReference type="GO" id="GO:0005829">
    <property type="term" value="C:cytosol"/>
    <property type="evidence" value="ECO:0007669"/>
    <property type="project" value="TreeGrafter"/>
</dbReference>
<dbReference type="GO" id="GO:0005960">
    <property type="term" value="C:glycine cleavage complex"/>
    <property type="evidence" value="ECO:0007669"/>
    <property type="project" value="InterPro"/>
</dbReference>
<dbReference type="GO" id="GO:0004047">
    <property type="term" value="F:aminomethyltransferase activity"/>
    <property type="evidence" value="ECO:0007669"/>
    <property type="project" value="UniProtKB-UniRule"/>
</dbReference>
<dbReference type="GO" id="GO:0008483">
    <property type="term" value="F:transaminase activity"/>
    <property type="evidence" value="ECO:0007669"/>
    <property type="project" value="UniProtKB-KW"/>
</dbReference>
<dbReference type="GO" id="GO:0019464">
    <property type="term" value="P:glycine decarboxylation via glycine cleavage system"/>
    <property type="evidence" value="ECO:0007669"/>
    <property type="project" value="UniProtKB-UniRule"/>
</dbReference>
<dbReference type="FunFam" id="3.30.70.1400:FF:000001">
    <property type="entry name" value="Aminomethyltransferase"/>
    <property type="match status" value="1"/>
</dbReference>
<dbReference type="FunFam" id="4.10.1250.10:FF:000001">
    <property type="entry name" value="Aminomethyltransferase"/>
    <property type="match status" value="1"/>
</dbReference>
<dbReference type="Gene3D" id="3.30.1360.120">
    <property type="entry name" value="Probable tRNA modification gtpase trme, domain 1"/>
    <property type="match status" value="1"/>
</dbReference>
<dbReference type="HAMAP" id="MF_00259">
    <property type="entry name" value="GcvT"/>
    <property type="match status" value="1"/>
</dbReference>
<dbReference type="InterPro" id="IPR006223">
    <property type="entry name" value="GCS_T"/>
</dbReference>
<dbReference type="InterPro" id="IPR022903">
    <property type="entry name" value="GCS_T_bac"/>
</dbReference>
<dbReference type="InterPro" id="IPR013977">
    <property type="entry name" value="GCST_C"/>
</dbReference>
<dbReference type="InterPro" id="IPR006222">
    <property type="entry name" value="GCV_T_N"/>
</dbReference>
<dbReference type="InterPro" id="IPR028896">
    <property type="entry name" value="GcvT/YgfZ/DmdA"/>
</dbReference>
<dbReference type="InterPro" id="IPR029043">
    <property type="entry name" value="GcvT/YgfZ_C"/>
</dbReference>
<dbReference type="InterPro" id="IPR027266">
    <property type="entry name" value="TrmE/GcvT_dom1"/>
</dbReference>
<dbReference type="NCBIfam" id="TIGR00528">
    <property type="entry name" value="gcvT"/>
    <property type="match status" value="1"/>
</dbReference>
<dbReference type="NCBIfam" id="NF001567">
    <property type="entry name" value="PRK00389.1"/>
    <property type="match status" value="1"/>
</dbReference>
<dbReference type="PANTHER" id="PTHR43757">
    <property type="entry name" value="AMINOMETHYLTRANSFERASE"/>
    <property type="match status" value="1"/>
</dbReference>
<dbReference type="PANTHER" id="PTHR43757:SF2">
    <property type="entry name" value="AMINOMETHYLTRANSFERASE, MITOCHONDRIAL"/>
    <property type="match status" value="1"/>
</dbReference>
<dbReference type="Pfam" id="PF01571">
    <property type="entry name" value="GCV_T"/>
    <property type="match status" value="1"/>
</dbReference>
<dbReference type="Pfam" id="PF08669">
    <property type="entry name" value="GCV_T_C"/>
    <property type="match status" value="1"/>
</dbReference>
<dbReference type="PIRSF" id="PIRSF006487">
    <property type="entry name" value="GcvT"/>
    <property type="match status" value="1"/>
</dbReference>
<dbReference type="SUPFAM" id="SSF101790">
    <property type="entry name" value="Aminomethyltransferase beta-barrel domain"/>
    <property type="match status" value="1"/>
</dbReference>
<dbReference type="SUPFAM" id="SSF103025">
    <property type="entry name" value="Folate-binding domain"/>
    <property type="match status" value="1"/>
</dbReference>
<reference key="1">
    <citation type="journal article" date="2009" name="Nat. Genet.">
        <title>Comparative genomic and phylogeographic analysis of Mycobacterium leprae.</title>
        <authorList>
            <person name="Monot M."/>
            <person name="Honore N."/>
            <person name="Garnier T."/>
            <person name="Zidane N."/>
            <person name="Sherafi D."/>
            <person name="Paniz-Mondolfi A."/>
            <person name="Matsuoka M."/>
            <person name="Taylor G.M."/>
            <person name="Donoghue H.D."/>
            <person name="Bouwman A."/>
            <person name="Mays S."/>
            <person name="Watson C."/>
            <person name="Lockwood D."/>
            <person name="Khamispour A."/>
            <person name="Dowlati Y."/>
            <person name="Jianping S."/>
            <person name="Rea T.H."/>
            <person name="Vera-Cabrera L."/>
            <person name="Stefani M.M."/>
            <person name="Banu S."/>
            <person name="Macdonald M."/>
            <person name="Sapkota B.R."/>
            <person name="Spencer J.S."/>
            <person name="Thomas J."/>
            <person name="Harshman K."/>
            <person name="Singh P."/>
            <person name="Busso P."/>
            <person name="Gattiker A."/>
            <person name="Rougemont J."/>
            <person name="Brennan P.J."/>
            <person name="Cole S.T."/>
        </authorList>
    </citation>
    <scope>NUCLEOTIDE SEQUENCE [LARGE SCALE GENOMIC DNA]</scope>
    <source>
        <strain>Br4923</strain>
    </source>
</reference>